<evidence type="ECO:0000250" key="1">
    <source>
        <dbReference type="UniProtKB" id="D2XUU4"/>
    </source>
</evidence>
<evidence type="ECO:0000255" key="2"/>
<evidence type="ECO:0000303" key="3">
    <source>
    </source>
</evidence>
<evidence type="ECO:0000305" key="4"/>
<evidence type="ECO:0000305" key="5">
    <source>
    </source>
</evidence>
<evidence type="ECO:0000312" key="6">
    <source>
        <dbReference type="EMBL" id="AGN53419.1"/>
    </source>
</evidence>
<feature type="signal peptide" evidence="2">
    <location>
        <begin position="1"/>
        <end position="18"/>
    </location>
</feature>
<feature type="propeptide" id="PRO_0000461978" evidence="1">
    <location>
        <begin position="19"/>
        <end position="57"/>
    </location>
</feature>
<feature type="peptide" id="PRO_5004480524" description="Arminin 7246" evidence="1">
    <location>
        <begin position="58"/>
        <end position="83"/>
    </location>
</feature>
<feature type="modified residue" description="Alanine amide" evidence="1">
    <location>
        <position position="83"/>
    </location>
</feature>
<name>ARM46_HYDVD</name>
<reference evidence="6" key="1">
    <citation type="journal article" date="2013" name="Proc. Natl. Acad. Sci. U.S.A.">
        <title>Distinct antimicrobial peptide expression determines host species-specific bacterial associations.</title>
        <authorList>
            <person name="Franzenburg S."/>
            <person name="Walter J."/>
            <person name="Kunzel S."/>
            <person name="Wang J."/>
            <person name="Baines J.F."/>
            <person name="Bosch T.C."/>
            <person name="Fraune S."/>
        </authorList>
    </citation>
    <scope>NUCLEOTIDE SEQUENCE [MRNA]</scope>
    <source>
        <strain>AEP</strain>
    </source>
</reference>
<accession>R9UE68</accession>
<proteinExistence type="inferred from homology"/>
<organism>
    <name type="scientific">Hydra viridissima</name>
    <name type="common">Green hydra</name>
    <name type="synonym">Chlorohydra viridissima</name>
    <dbReference type="NCBI Taxonomy" id="6082"/>
    <lineage>
        <taxon>Eukaryota</taxon>
        <taxon>Metazoa</taxon>
        <taxon>Cnidaria</taxon>
        <taxon>Hydrozoa</taxon>
        <taxon>Hydroidolina</taxon>
        <taxon>Anthoathecata</taxon>
        <taxon>Aplanulata</taxon>
        <taxon>Hydridae</taxon>
        <taxon>Hydra</taxon>
    </lineage>
</organism>
<dbReference type="EMBL" id="KC701512">
    <property type="protein sequence ID" value="AGN53419.1"/>
    <property type="molecule type" value="mRNA"/>
</dbReference>
<dbReference type="GO" id="GO:0005576">
    <property type="term" value="C:extracellular region"/>
    <property type="evidence" value="ECO:0007669"/>
    <property type="project" value="UniProtKB-SubCell"/>
</dbReference>
<comment type="function">
    <text evidence="1">Antimicrobial peptide with a broad-spectrum antimicrobial activity. Keeps its antibacterial activity under a wide range of salt concentrations that mimic physiological conditions of human blood, which is surprising, since Hydra is an obligate freshwater animal with nearly no salt tolerance. Does not affect red blood cells.</text>
</comment>
<comment type="subcellular location">
    <subcellularLocation>
        <location evidence="1">Secreted</location>
    </subcellularLocation>
    <subcellularLocation>
        <location evidence="1">Target cell membrane</location>
    </subcellularLocation>
</comment>
<comment type="tissue specificity">
    <text evidence="1 5">Expressed in entodermal epithelium along the body column.</text>
</comment>
<comment type="similarity">
    <text evidence="4">Belongs to the arminin family.</text>
</comment>
<protein>
    <recommendedName>
        <fullName evidence="3">Arminin 7246</fullName>
    </recommendedName>
</protein>
<sequence>MRPEYAVLFLALIALTYARSNEDVREEIKNEIEKDILEDLVEDEGELDDKAIDVNDAKPFRIRFRRIRWRKLVPYIPVALKLAGKK</sequence>
<keyword id="KW-0027">Amidation</keyword>
<keyword id="KW-0044">Antibiotic</keyword>
<keyword id="KW-0929">Antimicrobial</keyword>
<keyword id="KW-0391">Immunity</keyword>
<keyword id="KW-0399">Innate immunity</keyword>
<keyword id="KW-0472">Membrane</keyword>
<keyword id="KW-0964">Secreted</keyword>
<keyword id="KW-0732">Signal</keyword>
<keyword id="KW-1052">Target cell membrane</keyword>
<keyword id="KW-1053">Target membrane</keyword>